<name>DER_CAMHC</name>
<reference key="1">
    <citation type="submission" date="2007-07" db="EMBL/GenBank/DDBJ databases">
        <title>Complete genome sequence of Campylobacter hominis ATCC BAA-381, a commensal isolated from the human gastrointestinal tract.</title>
        <authorList>
            <person name="Fouts D.E."/>
            <person name="Mongodin E.F."/>
            <person name="Puiu D."/>
            <person name="Sebastian Y."/>
            <person name="Miller W.G."/>
            <person name="Mandrell R.E."/>
            <person name="Nelson K.E."/>
        </authorList>
    </citation>
    <scope>NUCLEOTIDE SEQUENCE [LARGE SCALE GENOMIC DNA]</scope>
    <source>
        <strain>ATCC BAA-381 / DSM 21671 / CCUG 45161 / LMG 19568 / NCTC 13146 / CH001A</strain>
    </source>
</reference>
<protein>
    <recommendedName>
        <fullName evidence="1">GTPase Der</fullName>
    </recommendedName>
    <alternativeName>
        <fullName evidence="1">GTP-binding protein EngA</fullName>
    </alternativeName>
</protein>
<comment type="function">
    <text evidence="1">GTPase that plays an essential role in the late steps of ribosome biogenesis.</text>
</comment>
<comment type="subunit">
    <text evidence="1">Associates with the 50S ribosomal subunit.</text>
</comment>
<comment type="similarity">
    <text evidence="1">Belongs to the TRAFAC class TrmE-Era-EngA-EngB-Septin-like GTPase superfamily. EngA (Der) GTPase family.</text>
</comment>
<proteinExistence type="inferred from homology"/>
<gene>
    <name evidence="1" type="primary">der</name>
    <name type="synonym">engA</name>
    <name type="ordered locus">CHAB381_0053</name>
</gene>
<dbReference type="EMBL" id="CP000776">
    <property type="protein sequence ID" value="ABS52483.1"/>
    <property type="molecule type" value="Genomic_DNA"/>
</dbReference>
<dbReference type="RefSeq" id="WP_011991521.1">
    <property type="nucleotide sequence ID" value="NC_009714.1"/>
</dbReference>
<dbReference type="SMR" id="A7HZI3"/>
<dbReference type="STRING" id="360107.CHAB381_0053"/>
<dbReference type="KEGG" id="cha:CHAB381_0053"/>
<dbReference type="eggNOG" id="COG1160">
    <property type="taxonomic scope" value="Bacteria"/>
</dbReference>
<dbReference type="HOGENOM" id="CLU_016077_6_2_7"/>
<dbReference type="OrthoDB" id="9805918at2"/>
<dbReference type="Proteomes" id="UP000002407">
    <property type="component" value="Chromosome"/>
</dbReference>
<dbReference type="GO" id="GO:0005525">
    <property type="term" value="F:GTP binding"/>
    <property type="evidence" value="ECO:0007669"/>
    <property type="project" value="UniProtKB-UniRule"/>
</dbReference>
<dbReference type="GO" id="GO:0043022">
    <property type="term" value="F:ribosome binding"/>
    <property type="evidence" value="ECO:0007669"/>
    <property type="project" value="TreeGrafter"/>
</dbReference>
<dbReference type="GO" id="GO:0042254">
    <property type="term" value="P:ribosome biogenesis"/>
    <property type="evidence" value="ECO:0007669"/>
    <property type="project" value="UniProtKB-KW"/>
</dbReference>
<dbReference type="CDD" id="cd01895">
    <property type="entry name" value="EngA2"/>
    <property type="match status" value="1"/>
</dbReference>
<dbReference type="FunFam" id="3.30.300.20:FF:000004">
    <property type="entry name" value="GTPase Der"/>
    <property type="match status" value="1"/>
</dbReference>
<dbReference type="FunFam" id="3.40.50.300:FF:000494">
    <property type="entry name" value="tRNA modification GTPase MnmE"/>
    <property type="match status" value="1"/>
</dbReference>
<dbReference type="Gene3D" id="3.30.300.20">
    <property type="match status" value="1"/>
</dbReference>
<dbReference type="Gene3D" id="3.40.50.300">
    <property type="entry name" value="P-loop containing nucleotide triphosphate hydrolases"/>
    <property type="match status" value="2"/>
</dbReference>
<dbReference type="HAMAP" id="MF_00195">
    <property type="entry name" value="GTPase_Der"/>
    <property type="match status" value="1"/>
</dbReference>
<dbReference type="InterPro" id="IPR031166">
    <property type="entry name" value="G_ENGA"/>
</dbReference>
<dbReference type="InterPro" id="IPR006073">
    <property type="entry name" value="GTP-bd"/>
</dbReference>
<dbReference type="InterPro" id="IPR016484">
    <property type="entry name" value="GTPase_Der"/>
</dbReference>
<dbReference type="InterPro" id="IPR032859">
    <property type="entry name" value="KH_dom-like"/>
</dbReference>
<dbReference type="InterPro" id="IPR015946">
    <property type="entry name" value="KH_dom-like_a/b"/>
</dbReference>
<dbReference type="InterPro" id="IPR027417">
    <property type="entry name" value="P-loop_NTPase"/>
</dbReference>
<dbReference type="InterPro" id="IPR005225">
    <property type="entry name" value="Small_GTP-bd"/>
</dbReference>
<dbReference type="NCBIfam" id="TIGR03594">
    <property type="entry name" value="GTPase_EngA"/>
    <property type="match status" value="1"/>
</dbReference>
<dbReference type="NCBIfam" id="TIGR00231">
    <property type="entry name" value="small_GTP"/>
    <property type="match status" value="2"/>
</dbReference>
<dbReference type="PANTHER" id="PTHR43834">
    <property type="entry name" value="GTPASE DER"/>
    <property type="match status" value="1"/>
</dbReference>
<dbReference type="PANTHER" id="PTHR43834:SF6">
    <property type="entry name" value="GTPASE DER"/>
    <property type="match status" value="1"/>
</dbReference>
<dbReference type="Pfam" id="PF14714">
    <property type="entry name" value="KH_dom-like"/>
    <property type="match status" value="1"/>
</dbReference>
<dbReference type="Pfam" id="PF01926">
    <property type="entry name" value="MMR_HSR1"/>
    <property type="match status" value="2"/>
</dbReference>
<dbReference type="PIRSF" id="PIRSF006485">
    <property type="entry name" value="GTP-binding_EngA"/>
    <property type="match status" value="1"/>
</dbReference>
<dbReference type="PRINTS" id="PR00326">
    <property type="entry name" value="GTP1OBG"/>
</dbReference>
<dbReference type="SMART" id="SM00173">
    <property type="entry name" value="RAS"/>
    <property type="match status" value="1"/>
</dbReference>
<dbReference type="SUPFAM" id="SSF52540">
    <property type="entry name" value="P-loop containing nucleoside triphosphate hydrolases"/>
    <property type="match status" value="2"/>
</dbReference>
<dbReference type="PROSITE" id="PS51712">
    <property type="entry name" value="G_ENGA"/>
    <property type="match status" value="2"/>
</dbReference>
<organism>
    <name type="scientific">Campylobacter hominis (strain ATCC BAA-381 / DSM 21671 / CCUG 45161 / LMG 19568 / NCTC 13146 / CH001A)</name>
    <dbReference type="NCBI Taxonomy" id="360107"/>
    <lineage>
        <taxon>Bacteria</taxon>
        <taxon>Pseudomonadati</taxon>
        <taxon>Campylobacterota</taxon>
        <taxon>Epsilonproteobacteria</taxon>
        <taxon>Campylobacterales</taxon>
        <taxon>Campylobacteraceae</taxon>
        <taxon>Campylobacter</taxon>
    </lineage>
</organism>
<evidence type="ECO:0000255" key="1">
    <source>
        <dbReference type="HAMAP-Rule" id="MF_00195"/>
    </source>
</evidence>
<accession>A7HZI3</accession>
<feature type="chain" id="PRO_1000011593" description="GTPase Der">
    <location>
        <begin position="1"/>
        <end position="460"/>
    </location>
</feature>
<feature type="domain" description="EngA-type G 1">
    <location>
        <begin position="2"/>
        <end position="164"/>
    </location>
</feature>
<feature type="domain" description="EngA-type G 2">
    <location>
        <begin position="199"/>
        <end position="370"/>
    </location>
</feature>
<feature type="domain" description="KH-like" evidence="1">
    <location>
        <begin position="371"/>
        <end position="454"/>
    </location>
</feature>
<feature type="binding site" evidence="1">
    <location>
        <begin position="8"/>
        <end position="15"/>
    </location>
    <ligand>
        <name>GTP</name>
        <dbReference type="ChEBI" id="CHEBI:37565"/>
        <label>1</label>
    </ligand>
</feature>
<feature type="binding site" evidence="1">
    <location>
        <begin position="55"/>
        <end position="59"/>
    </location>
    <ligand>
        <name>GTP</name>
        <dbReference type="ChEBI" id="CHEBI:37565"/>
        <label>1</label>
    </ligand>
</feature>
<feature type="binding site" evidence="1">
    <location>
        <begin position="116"/>
        <end position="119"/>
    </location>
    <ligand>
        <name>GTP</name>
        <dbReference type="ChEBI" id="CHEBI:37565"/>
        <label>1</label>
    </ligand>
</feature>
<feature type="binding site" evidence="1">
    <location>
        <begin position="205"/>
        <end position="212"/>
    </location>
    <ligand>
        <name>GTP</name>
        <dbReference type="ChEBI" id="CHEBI:37565"/>
        <label>2</label>
    </ligand>
</feature>
<feature type="binding site" evidence="1">
    <location>
        <begin position="252"/>
        <end position="256"/>
    </location>
    <ligand>
        <name>GTP</name>
        <dbReference type="ChEBI" id="CHEBI:37565"/>
        <label>2</label>
    </ligand>
</feature>
<feature type="binding site" evidence="1">
    <location>
        <begin position="316"/>
        <end position="319"/>
    </location>
    <ligand>
        <name>GTP</name>
        <dbReference type="ChEBI" id="CHEBI:37565"/>
        <label>2</label>
    </ligand>
</feature>
<sequence>MKKVILIGRPNVGKSSLFNRFVGKRIAITSDISGTTRDTNKTVIEIFDKKCILIDSGGLDDSSEMFAKVQAKTLKEVRNCDIILFIVDGKFMPSDDEKKLFHSFSGLNKPLALVINKIDSKKDEERSFEFIEFGAKDKFNISVSHNDGIDEVKSWIYKLLDDEISADESENFDDFISNLDENGEILEEKDESFYENKPIKVGIIGRVNVGKSSLLNALVKENRAVVSEVAGTTIDPVNENYTFNDKVIEFVDTAGIRKRGKIEGIEKFALNRTEKILEQCDIALMVLDASEPFSELDERIAGLAAKFELGVIIVLNKWDKSEEDFDKVQKKIKDKFRFLSYAPIISVSALGGKRIHKIYDMILEIYANFTQKIATSKLNDFIAEATAQHPIPQDKGKNVKIYYAAQIGFAPPKIALVMNRTVLHFSYKRYLINQMRENFTLNGTPVILLPRKRGNSKDEK</sequence>
<keyword id="KW-0342">GTP-binding</keyword>
<keyword id="KW-0547">Nucleotide-binding</keyword>
<keyword id="KW-1185">Reference proteome</keyword>
<keyword id="KW-0677">Repeat</keyword>
<keyword id="KW-0690">Ribosome biogenesis</keyword>